<reference key="1">
    <citation type="journal article" date="2003" name="Nat. Genet.">
        <title>Comparative analysis of the genome sequences of Bordetella pertussis, Bordetella parapertussis and Bordetella bronchiseptica.</title>
        <authorList>
            <person name="Parkhill J."/>
            <person name="Sebaihia M."/>
            <person name="Preston A."/>
            <person name="Murphy L.D."/>
            <person name="Thomson N.R."/>
            <person name="Harris D.E."/>
            <person name="Holden M.T.G."/>
            <person name="Churcher C.M."/>
            <person name="Bentley S.D."/>
            <person name="Mungall K.L."/>
            <person name="Cerdeno-Tarraga A.-M."/>
            <person name="Temple L."/>
            <person name="James K.D."/>
            <person name="Harris B."/>
            <person name="Quail M.A."/>
            <person name="Achtman M."/>
            <person name="Atkin R."/>
            <person name="Baker S."/>
            <person name="Basham D."/>
            <person name="Bason N."/>
            <person name="Cherevach I."/>
            <person name="Chillingworth T."/>
            <person name="Collins M."/>
            <person name="Cronin A."/>
            <person name="Davis P."/>
            <person name="Doggett J."/>
            <person name="Feltwell T."/>
            <person name="Goble A."/>
            <person name="Hamlin N."/>
            <person name="Hauser H."/>
            <person name="Holroyd S."/>
            <person name="Jagels K."/>
            <person name="Leather S."/>
            <person name="Moule S."/>
            <person name="Norberczak H."/>
            <person name="O'Neil S."/>
            <person name="Ormond D."/>
            <person name="Price C."/>
            <person name="Rabbinowitsch E."/>
            <person name="Rutter S."/>
            <person name="Sanders M."/>
            <person name="Saunders D."/>
            <person name="Seeger K."/>
            <person name="Sharp S."/>
            <person name="Simmonds M."/>
            <person name="Skelton J."/>
            <person name="Squares R."/>
            <person name="Squares S."/>
            <person name="Stevens K."/>
            <person name="Unwin L."/>
            <person name="Whitehead S."/>
            <person name="Barrell B.G."/>
            <person name="Maskell D.J."/>
        </authorList>
    </citation>
    <scope>NUCLEOTIDE SEQUENCE [LARGE SCALE GENOMIC DNA]</scope>
    <source>
        <strain>Tohama I / ATCC BAA-589 / NCTC 13251</strain>
    </source>
</reference>
<gene>
    <name evidence="1" type="primary">aroE</name>
    <name type="ordered locus">BP3004</name>
</gene>
<feature type="chain" id="PRO_0000325108" description="Shikimate dehydrogenase (NADP(+))">
    <location>
        <begin position="1"/>
        <end position="287"/>
    </location>
</feature>
<feature type="active site" description="Proton acceptor" evidence="1">
    <location>
        <position position="71"/>
    </location>
</feature>
<feature type="binding site" evidence="1">
    <location>
        <begin position="20"/>
        <end position="22"/>
    </location>
    <ligand>
        <name>shikimate</name>
        <dbReference type="ChEBI" id="CHEBI:36208"/>
    </ligand>
</feature>
<feature type="binding site" evidence="1">
    <location>
        <position position="67"/>
    </location>
    <ligand>
        <name>shikimate</name>
        <dbReference type="ChEBI" id="CHEBI:36208"/>
    </ligand>
</feature>
<feature type="binding site" evidence="1">
    <location>
        <position position="84"/>
    </location>
    <ligand>
        <name>NADP(+)</name>
        <dbReference type="ChEBI" id="CHEBI:58349"/>
    </ligand>
</feature>
<feature type="binding site" evidence="1">
    <location>
        <position position="93"/>
    </location>
    <ligand>
        <name>shikimate</name>
        <dbReference type="ChEBI" id="CHEBI:36208"/>
    </ligand>
</feature>
<feature type="binding site" evidence="1">
    <location>
        <position position="108"/>
    </location>
    <ligand>
        <name>shikimate</name>
        <dbReference type="ChEBI" id="CHEBI:36208"/>
    </ligand>
</feature>
<feature type="binding site" evidence="1">
    <location>
        <begin position="132"/>
        <end position="136"/>
    </location>
    <ligand>
        <name>NADP(+)</name>
        <dbReference type="ChEBI" id="CHEBI:58349"/>
    </ligand>
</feature>
<feature type="binding site" evidence="1">
    <location>
        <begin position="156"/>
        <end position="161"/>
    </location>
    <ligand>
        <name>NADP(+)</name>
        <dbReference type="ChEBI" id="CHEBI:58349"/>
    </ligand>
</feature>
<feature type="binding site" evidence="1">
    <location>
        <position position="226"/>
    </location>
    <ligand>
        <name>NADP(+)</name>
        <dbReference type="ChEBI" id="CHEBI:58349"/>
    </ligand>
</feature>
<feature type="binding site" evidence="1">
    <location>
        <position position="228"/>
    </location>
    <ligand>
        <name>shikimate</name>
        <dbReference type="ChEBI" id="CHEBI:36208"/>
    </ligand>
</feature>
<feature type="binding site" evidence="1">
    <location>
        <position position="250"/>
    </location>
    <ligand>
        <name>NADP(+)</name>
        <dbReference type="ChEBI" id="CHEBI:58349"/>
    </ligand>
</feature>
<name>AROE_BORPE</name>
<protein>
    <recommendedName>
        <fullName evidence="1">Shikimate dehydrogenase (NADP(+))</fullName>
        <shortName evidence="1">SDH</shortName>
        <ecNumber evidence="1">1.1.1.25</ecNumber>
    </recommendedName>
</protein>
<evidence type="ECO:0000255" key="1">
    <source>
        <dbReference type="HAMAP-Rule" id="MF_00222"/>
    </source>
</evidence>
<keyword id="KW-0028">Amino-acid biosynthesis</keyword>
<keyword id="KW-0057">Aromatic amino acid biosynthesis</keyword>
<keyword id="KW-0521">NADP</keyword>
<keyword id="KW-0560">Oxidoreductase</keyword>
<keyword id="KW-1185">Reference proteome</keyword>
<dbReference type="EC" id="1.1.1.25" evidence="1"/>
<dbReference type="EMBL" id="BX640420">
    <property type="protein sequence ID" value="CAE43275.1"/>
    <property type="molecule type" value="Genomic_DNA"/>
</dbReference>
<dbReference type="RefSeq" id="NP_881579.1">
    <property type="nucleotide sequence ID" value="NC_002929.2"/>
</dbReference>
<dbReference type="RefSeq" id="WP_010931247.1">
    <property type="nucleotide sequence ID" value="NZ_CP039022.1"/>
</dbReference>
<dbReference type="SMR" id="Q7VUS1"/>
<dbReference type="STRING" id="257313.BP3004"/>
<dbReference type="PaxDb" id="257313-BP3004"/>
<dbReference type="GeneID" id="69602927"/>
<dbReference type="KEGG" id="bpe:BP3004"/>
<dbReference type="PATRIC" id="fig|257313.5.peg.3249"/>
<dbReference type="eggNOG" id="COG0169">
    <property type="taxonomic scope" value="Bacteria"/>
</dbReference>
<dbReference type="HOGENOM" id="CLU_044063_2_1_4"/>
<dbReference type="UniPathway" id="UPA00053">
    <property type="reaction ID" value="UER00087"/>
</dbReference>
<dbReference type="Proteomes" id="UP000002676">
    <property type="component" value="Chromosome"/>
</dbReference>
<dbReference type="GO" id="GO:0005829">
    <property type="term" value="C:cytosol"/>
    <property type="evidence" value="ECO:0007669"/>
    <property type="project" value="TreeGrafter"/>
</dbReference>
<dbReference type="GO" id="GO:0050661">
    <property type="term" value="F:NADP binding"/>
    <property type="evidence" value="ECO:0007669"/>
    <property type="project" value="InterPro"/>
</dbReference>
<dbReference type="GO" id="GO:0004764">
    <property type="term" value="F:shikimate 3-dehydrogenase (NADP+) activity"/>
    <property type="evidence" value="ECO:0007669"/>
    <property type="project" value="UniProtKB-UniRule"/>
</dbReference>
<dbReference type="GO" id="GO:0008652">
    <property type="term" value="P:amino acid biosynthetic process"/>
    <property type="evidence" value="ECO:0007669"/>
    <property type="project" value="UniProtKB-KW"/>
</dbReference>
<dbReference type="GO" id="GO:0009073">
    <property type="term" value="P:aromatic amino acid family biosynthetic process"/>
    <property type="evidence" value="ECO:0007669"/>
    <property type="project" value="UniProtKB-KW"/>
</dbReference>
<dbReference type="GO" id="GO:0009423">
    <property type="term" value="P:chorismate biosynthetic process"/>
    <property type="evidence" value="ECO:0007669"/>
    <property type="project" value="UniProtKB-UniRule"/>
</dbReference>
<dbReference type="GO" id="GO:0019632">
    <property type="term" value="P:shikimate metabolic process"/>
    <property type="evidence" value="ECO:0007669"/>
    <property type="project" value="InterPro"/>
</dbReference>
<dbReference type="CDD" id="cd01065">
    <property type="entry name" value="NAD_bind_Shikimate_DH"/>
    <property type="match status" value="1"/>
</dbReference>
<dbReference type="FunFam" id="3.40.50.10860:FF:000006">
    <property type="entry name" value="Shikimate dehydrogenase (NADP(+))"/>
    <property type="match status" value="1"/>
</dbReference>
<dbReference type="Gene3D" id="3.40.50.10860">
    <property type="entry name" value="Leucine Dehydrogenase, chain A, domain 1"/>
    <property type="match status" value="1"/>
</dbReference>
<dbReference type="Gene3D" id="3.40.50.720">
    <property type="entry name" value="NAD(P)-binding Rossmann-like Domain"/>
    <property type="match status" value="1"/>
</dbReference>
<dbReference type="HAMAP" id="MF_00222">
    <property type="entry name" value="Shikimate_DH_AroE"/>
    <property type="match status" value="1"/>
</dbReference>
<dbReference type="InterPro" id="IPR046346">
    <property type="entry name" value="Aminoacid_DH-like_N_sf"/>
</dbReference>
<dbReference type="InterPro" id="IPR036291">
    <property type="entry name" value="NAD(P)-bd_dom_sf"/>
</dbReference>
<dbReference type="InterPro" id="IPR041121">
    <property type="entry name" value="SDH_C"/>
</dbReference>
<dbReference type="InterPro" id="IPR011342">
    <property type="entry name" value="Shikimate_DH"/>
</dbReference>
<dbReference type="InterPro" id="IPR013708">
    <property type="entry name" value="Shikimate_DH-bd_N"/>
</dbReference>
<dbReference type="InterPro" id="IPR022893">
    <property type="entry name" value="Shikimate_DH_fam"/>
</dbReference>
<dbReference type="InterPro" id="IPR006151">
    <property type="entry name" value="Shikm_DH/Glu-tRNA_Rdtase"/>
</dbReference>
<dbReference type="NCBIfam" id="TIGR00507">
    <property type="entry name" value="aroE"/>
    <property type="match status" value="1"/>
</dbReference>
<dbReference type="NCBIfam" id="NF001310">
    <property type="entry name" value="PRK00258.1-2"/>
    <property type="match status" value="1"/>
</dbReference>
<dbReference type="PANTHER" id="PTHR21089:SF1">
    <property type="entry name" value="BIFUNCTIONAL 3-DEHYDROQUINATE DEHYDRATASE_SHIKIMATE DEHYDROGENASE, CHLOROPLASTIC"/>
    <property type="match status" value="1"/>
</dbReference>
<dbReference type="PANTHER" id="PTHR21089">
    <property type="entry name" value="SHIKIMATE DEHYDROGENASE"/>
    <property type="match status" value="1"/>
</dbReference>
<dbReference type="Pfam" id="PF18317">
    <property type="entry name" value="SDH_C"/>
    <property type="match status" value="1"/>
</dbReference>
<dbReference type="Pfam" id="PF01488">
    <property type="entry name" value="Shikimate_DH"/>
    <property type="match status" value="1"/>
</dbReference>
<dbReference type="Pfam" id="PF08501">
    <property type="entry name" value="Shikimate_dh_N"/>
    <property type="match status" value="1"/>
</dbReference>
<dbReference type="SUPFAM" id="SSF53223">
    <property type="entry name" value="Aminoacid dehydrogenase-like, N-terminal domain"/>
    <property type="match status" value="1"/>
</dbReference>
<dbReference type="SUPFAM" id="SSF51735">
    <property type="entry name" value="NAD(P)-binding Rossmann-fold domains"/>
    <property type="match status" value="1"/>
</dbReference>
<accession>Q7VUS1</accession>
<comment type="function">
    <text evidence="1">Involved in the biosynthesis of the chorismate, which leads to the biosynthesis of aromatic amino acids. Catalyzes the reversible NADPH linked reduction of 3-dehydroshikimate (DHSA) to yield shikimate (SA).</text>
</comment>
<comment type="catalytic activity">
    <reaction evidence="1">
        <text>shikimate + NADP(+) = 3-dehydroshikimate + NADPH + H(+)</text>
        <dbReference type="Rhea" id="RHEA:17737"/>
        <dbReference type="ChEBI" id="CHEBI:15378"/>
        <dbReference type="ChEBI" id="CHEBI:16630"/>
        <dbReference type="ChEBI" id="CHEBI:36208"/>
        <dbReference type="ChEBI" id="CHEBI:57783"/>
        <dbReference type="ChEBI" id="CHEBI:58349"/>
        <dbReference type="EC" id="1.1.1.25"/>
    </reaction>
</comment>
<comment type="pathway">
    <text evidence="1">Metabolic intermediate biosynthesis; chorismate biosynthesis; chorismate from D-erythrose 4-phosphate and phosphoenolpyruvate: step 4/7.</text>
</comment>
<comment type="subunit">
    <text evidence="1">Homodimer.</text>
</comment>
<comment type="similarity">
    <text evidence="1">Belongs to the shikimate dehydrogenase family.</text>
</comment>
<organism>
    <name type="scientific">Bordetella pertussis (strain Tohama I / ATCC BAA-589 / NCTC 13251)</name>
    <dbReference type="NCBI Taxonomy" id="257313"/>
    <lineage>
        <taxon>Bacteria</taxon>
        <taxon>Pseudomonadati</taxon>
        <taxon>Pseudomonadota</taxon>
        <taxon>Betaproteobacteria</taxon>
        <taxon>Burkholderiales</taxon>
        <taxon>Alcaligenaceae</taxon>
        <taxon>Bordetella</taxon>
    </lineage>
</organism>
<proteinExistence type="inferred from homology"/>
<sequence length="287" mass="29518">MTLPASPPRYAVIGNPIAHSRSPQIHAMFSAQTGRPLRYERLLAPVDGFLPTVQAFRESGGLGLNVTVPFKLEAYALAEARLSERARLAGAVNTLSWRDGAWHGCNTDGVGLVNDLLRLGVALAGARVLLVGAGGAARGVLQPLAAAGCARIHIVNRTAARAAELAAAWRAAAPRTGTQVSAGALAQAAEPGGWDVAINATASGLQGAAPDLPGGLYAPDALAYDMMYGARPTAFMRQAEADGAARCADGLGMLVGQAAESFHIWHGVRPDPGPVLLALRTELLAAG</sequence>